<proteinExistence type="evidence at protein level"/>
<organism>
    <name type="scientific">Felis catus</name>
    <name type="common">Cat</name>
    <name type="synonym">Felis silvestris catus</name>
    <dbReference type="NCBI Taxonomy" id="9685"/>
    <lineage>
        <taxon>Eukaryota</taxon>
        <taxon>Metazoa</taxon>
        <taxon>Chordata</taxon>
        <taxon>Craniata</taxon>
        <taxon>Vertebrata</taxon>
        <taxon>Euteleostomi</taxon>
        <taxon>Mammalia</taxon>
        <taxon>Eutheria</taxon>
        <taxon>Laurasiatheria</taxon>
        <taxon>Carnivora</taxon>
        <taxon>Feliformia</taxon>
        <taxon>Felidae</taxon>
        <taxon>Felinae</taxon>
        <taxon>Felis</taxon>
    </lineage>
</organism>
<gene>
    <name type="primary">RPL41</name>
</gene>
<accession>P62946</accession>
<accession>P28751</accession>
<name>RS32_FELCA</name>
<protein>
    <recommendedName>
        <fullName evidence="5">Small ribosomal subunit protein eS32</fullName>
    </recommendedName>
    <alternativeName>
        <fullName>60S ribosomal protein L41</fullName>
    </alternativeName>
    <alternativeName>
        <fullName evidence="4">Large ribosomal subunit protein eL41</fullName>
    </alternativeName>
</protein>
<sequence>MRAKWRKKRMRRLKRKRRKMRQRSK</sequence>
<feature type="chain" id="PRO_0000198054" description="Small ribosomal subunit protein eS32">
    <location>
        <begin position="1"/>
        <end position="25"/>
    </location>
</feature>
<feature type="region of interest" description="Disordered" evidence="3">
    <location>
        <begin position="1"/>
        <end position="25"/>
    </location>
</feature>
<reference key="1">
    <citation type="journal article" date="1996" name="Biochem. Biophys. Res. Commun.">
        <title>Primary sequence and evolutionary conservation of ribosomal protein genes from the domestic cat.</title>
        <authorList>
            <person name="Starkey C.R."/>
            <person name="Menon R.P."/>
            <person name="Prabhu S."/>
            <person name="Levy L.S."/>
        </authorList>
    </citation>
    <scope>NUCLEOTIDE SEQUENCE [MRNA]</scope>
</reference>
<reference key="2">
    <citation type="unpublished observations" date="2023-10">
        <authorList>
            <person name="Leibundgut M.A."/>
            <person name="Ban N."/>
        </authorList>
    </citation>
    <scope>REVISION OF SUBUNIT</scope>
    <scope>NOMENCLATURE</scope>
</reference>
<evidence type="ECO:0000250" key="1">
    <source>
        <dbReference type="UniProtKB" id="P62945"/>
    </source>
</evidence>
<evidence type="ECO:0000250" key="2">
    <source>
        <dbReference type="UniProtKB" id="P62947"/>
    </source>
</evidence>
<evidence type="ECO:0000256" key="3">
    <source>
        <dbReference type="SAM" id="MobiDB-lite"/>
    </source>
</evidence>
<evidence type="ECO:0000305" key="4"/>
<evidence type="ECO:0000305" key="5">
    <source ref="2"/>
</evidence>
<keyword id="KW-0963">Cytoplasm</keyword>
<keyword id="KW-1185">Reference proteome</keyword>
<keyword id="KW-0687">Ribonucleoprotein</keyword>
<keyword id="KW-0689">Ribosomal protein</keyword>
<comment type="function">
    <text evidence="1 2 5">Component of the small ribosomal subunit (Probable) (Ref.2). The ribosome is a large ribonucleoprotein complex responsible for the synthesis of proteins in the cell (By similarity). Interacts with the beta subunit of protein kinase CKII and stimulates phosphorylation of DNA topoisomerase II alpha by CKII (By similarity).</text>
</comment>
<comment type="subunit">
    <text evidence="5">Component of the small ribosomal subunit (Ref.2).</text>
</comment>
<comment type="subcellular location">
    <subcellularLocation>
        <location evidence="2">Cytoplasm</location>
    </subcellularLocation>
</comment>
<comment type="miscellaneous">
    <text evidence="5">Initially thought to be part of the large ribosomal subunit. Crystal structures show eS32/eL41 to be a small ribosomal subunit forming a bridge at the interface of the 2 subunits.</text>
</comment>
<comment type="similarity">
    <text evidence="4">Belongs to the eukaryotic ribosomal protein eS32 family.</text>
</comment>
<dbReference type="EMBL" id="U22229">
    <property type="protein sequence ID" value="AAB01667.1"/>
    <property type="molecule type" value="mRNA"/>
</dbReference>
<dbReference type="PIR" id="JC4685">
    <property type="entry name" value="JC4685"/>
</dbReference>
<dbReference type="RefSeq" id="NP_001041622.1">
    <property type="nucleotide sequence ID" value="NM_001048157.1"/>
</dbReference>
<dbReference type="SMR" id="P62946"/>
<dbReference type="Ensembl" id="ENSFCAT00000053431.1">
    <property type="protein sequence ID" value="ENSFCAP00000051172.1"/>
    <property type="gene ID" value="ENSFCAG00000041907.1"/>
</dbReference>
<dbReference type="GeneID" id="751110"/>
<dbReference type="KEGG" id="fca:751110"/>
<dbReference type="CTD" id="6171"/>
<dbReference type="InParanoid" id="P62946"/>
<dbReference type="OrthoDB" id="250836at2759"/>
<dbReference type="Proteomes" id="UP000011712">
    <property type="component" value="Chromosome B4"/>
</dbReference>
<dbReference type="Bgee" id="ENSFCAG00000041907">
    <property type="expression patterns" value="Expressed in eyeball of camera-type eye and 11 other cell types or tissues"/>
</dbReference>
<dbReference type="GO" id="GO:0005737">
    <property type="term" value="C:cytoplasm"/>
    <property type="evidence" value="ECO:0007669"/>
    <property type="project" value="UniProtKB-SubCell"/>
</dbReference>
<dbReference type="GO" id="GO:1990904">
    <property type="term" value="C:ribonucleoprotein complex"/>
    <property type="evidence" value="ECO:0007669"/>
    <property type="project" value="UniProtKB-KW"/>
</dbReference>
<dbReference type="GO" id="GO:0005840">
    <property type="term" value="C:ribosome"/>
    <property type="evidence" value="ECO:0007669"/>
    <property type="project" value="UniProtKB-KW"/>
</dbReference>
<dbReference type="GO" id="GO:0003735">
    <property type="term" value="F:structural constituent of ribosome"/>
    <property type="evidence" value="ECO:0007669"/>
    <property type="project" value="InterPro"/>
</dbReference>
<dbReference type="GO" id="GO:0006412">
    <property type="term" value="P:translation"/>
    <property type="evidence" value="ECO:0007669"/>
    <property type="project" value="InterPro"/>
</dbReference>
<dbReference type="InterPro" id="IPR007836">
    <property type="entry name" value="Ribosomal_eS32"/>
</dbReference>
<dbReference type="Pfam" id="PF05162">
    <property type="entry name" value="Ribosomal_L41"/>
    <property type="match status" value="1"/>
</dbReference>